<evidence type="ECO:0000250" key="1">
    <source>
        <dbReference type="UniProtKB" id="P27467"/>
    </source>
</evidence>
<evidence type="ECO:0000250" key="2">
    <source>
        <dbReference type="UniProtKB" id="P28026"/>
    </source>
</evidence>
<evidence type="ECO:0000250" key="3">
    <source>
        <dbReference type="UniProtKB" id="P56704"/>
    </source>
</evidence>
<evidence type="ECO:0000250" key="4">
    <source>
        <dbReference type="UniProtKB" id="Q2LMP1"/>
    </source>
</evidence>
<evidence type="ECO:0000255" key="5"/>
<evidence type="ECO:0000269" key="6">
    <source>
    </source>
</evidence>
<evidence type="ECO:0000269" key="7">
    <source>
    </source>
</evidence>
<evidence type="ECO:0000269" key="8">
    <source>
    </source>
</evidence>
<evidence type="ECO:0000269" key="9">
    <source>
    </source>
</evidence>
<evidence type="ECO:0000269" key="10">
    <source>
    </source>
</evidence>
<evidence type="ECO:0000269" key="11">
    <source>
    </source>
</evidence>
<evidence type="ECO:0000269" key="12">
    <source>
    </source>
</evidence>
<evidence type="ECO:0000269" key="13">
    <source>
    </source>
</evidence>
<evidence type="ECO:0000269" key="14">
    <source>
    </source>
</evidence>
<evidence type="ECO:0000305" key="15"/>
<evidence type="ECO:0000312" key="16">
    <source>
        <dbReference type="WormBase" id="W01B6.1"/>
    </source>
</evidence>
<feature type="signal peptide" evidence="5">
    <location>
        <begin position="1"/>
        <end position="37"/>
    </location>
</feature>
<feature type="chain" id="PRO_0000041474" description="Protein Wnt-2">
    <location>
        <begin position="38"/>
        <end position="360"/>
    </location>
</feature>
<feature type="lipid moiety-binding region" description="O-palmitoleoyl serine; by mom-1" evidence="3">
    <location>
        <position position="219"/>
    </location>
</feature>
<feature type="glycosylation site" description="N-linked (GlcNAc...) asparagine" evidence="5">
    <location>
        <position position="90"/>
    </location>
</feature>
<feature type="glycosylation site" description="N-linked (GlcNAc...) asparagine" evidence="5">
    <location>
        <position position="352"/>
    </location>
</feature>
<feature type="disulfide bond" evidence="2">
    <location>
        <begin position="80"/>
        <end position="91"/>
    </location>
</feature>
<feature type="disulfide bond" evidence="2">
    <location>
        <begin position="130"/>
        <end position="138"/>
    </location>
</feature>
<feature type="disulfide bond" evidence="2">
    <location>
        <begin position="140"/>
        <end position="158"/>
    </location>
</feature>
<feature type="disulfide bond" evidence="2">
    <location>
        <begin position="213"/>
        <end position="227"/>
    </location>
</feature>
<feature type="disulfide bond" evidence="2">
    <location>
        <begin position="215"/>
        <end position="222"/>
    </location>
</feature>
<feature type="disulfide bond" evidence="2">
    <location>
        <begin position="289"/>
        <end position="320"/>
    </location>
</feature>
<feature type="disulfide bond" evidence="2">
    <location>
        <begin position="305"/>
        <end position="315"/>
    </location>
</feature>
<feature type="disulfide bond" evidence="2">
    <location>
        <begin position="319"/>
        <end position="359"/>
    </location>
</feature>
<feature type="disulfide bond" evidence="2">
    <location>
        <begin position="335"/>
        <end position="350"/>
    </location>
</feature>
<feature type="disulfide bond" evidence="2">
    <location>
        <begin position="337"/>
        <end position="347"/>
    </location>
</feature>
<feature type="disulfide bond" evidence="2">
    <location>
        <begin position="342"/>
        <end position="343"/>
    </location>
</feature>
<feature type="mutagenesis site" description="In xd1; loss of neurite growth from RMED and RMEV GABAergic motor neurons." evidence="11">
    <original>C</original>
    <variation>Y</variation>
    <location>
        <position position="138"/>
    </location>
</feature>
<feature type="sequence conflict" description="In Ref. 1; CAA51448." evidence="15" ref="1">
    <original>A</original>
    <variation>R</variation>
    <location>
        <position position="73"/>
    </location>
</feature>
<feature type="sequence conflict" description="In Ref. 1; CAA51448." evidence="15" ref="1">
    <original>H</original>
    <variation>D</variation>
    <location>
        <position position="186"/>
    </location>
</feature>
<feature type="sequence conflict" description="In Ref. 1; CAA51448." evidence="15" ref="1">
    <original>A</original>
    <variation>R</variation>
    <location>
        <position position="221"/>
    </location>
</feature>
<feature type="sequence conflict" description="In Ref. 1; CAA51448." evidence="15" ref="1">
    <original>MQ</original>
    <variation>IE</variation>
    <location>
        <begin position="229"/>
        <end position="230"/>
    </location>
</feature>
<feature type="sequence conflict" description="In Ref. 1; CAA51448." evidence="15" ref="1">
    <original>S</original>
    <variation>A</variation>
    <location>
        <position position="333"/>
    </location>
</feature>
<sequence>MIPRRSCWLILLLNLLNVQSLLDASWWSTVAQLSTALAGHNVKPVCELPGLSPGQAQVCELFKDHMPAVSIGAQNAIQECQRQFTGHRWNCSTHYSTGMLGPIHKMATREAAFTYAILSAGVTHEIGRRCKQGLLTSCGCSDETKPKNVPTDWSWGGCGDNVEYGYKFSRDFIDIREKEHDPKRNHDNGRSLMNRRNNEAGRKILKRHRKPKCKCHGVSGACNMKTCWMQLPSMEQVGKILRNKYDKAIRVQINDRGNLQLLADEATKERKTRALPTDLVFMDDSPDYCRFDRHSGTLGTEGRVCKRGSGGAEGCDSLCCGRGYNTYTQEVKSKCNCKFEWCCKVVCQTCNNVTQVDICK</sequence>
<accession>P34889</accession>
<dbReference type="EMBL" id="X72943">
    <property type="protein sequence ID" value="CAA51448.1"/>
    <property type="molecule type" value="mRNA"/>
</dbReference>
<dbReference type="EMBL" id="Z68301">
    <property type="protein sequence ID" value="CAA92624.1"/>
    <property type="molecule type" value="Genomic_DNA"/>
</dbReference>
<dbReference type="PIR" id="S32695">
    <property type="entry name" value="S32695"/>
</dbReference>
<dbReference type="PIR" id="T26037">
    <property type="entry name" value="T26037"/>
</dbReference>
<dbReference type="RefSeq" id="NP_501822.1">
    <property type="nucleotide sequence ID" value="NM_069421.6"/>
</dbReference>
<dbReference type="SMR" id="P34889"/>
<dbReference type="BioGRID" id="42973">
    <property type="interactions" value="3"/>
</dbReference>
<dbReference type="FunCoup" id="P34889">
    <property type="interactions" value="65"/>
</dbReference>
<dbReference type="STRING" id="6239.W01B6.1.1"/>
<dbReference type="GlyCosmos" id="P34889">
    <property type="glycosylation" value="2 sites, No reported glycans"/>
</dbReference>
<dbReference type="PaxDb" id="6239-W01B6.1"/>
<dbReference type="EnsemblMetazoa" id="W01B6.1.1">
    <property type="protein sequence ID" value="W01B6.1.1"/>
    <property type="gene ID" value="WBGene00000858"/>
</dbReference>
<dbReference type="GeneID" id="177870"/>
<dbReference type="KEGG" id="cel:CELE_W01B6.1"/>
<dbReference type="UCSC" id="W01B6.1">
    <property type="organism name" value="c. elegans"/>
</dbReference>
<dbReference type="AGR" id="WB:WBGene00000858"/>
<dbReference type="CTD" id="177870"/>
<dbReference type="WormBase" id="W01B6.1">
    <property type="protein sequence ID" value="CE03753"/>
    <property type="gene ID" value="WBGene00000858"/>
    <property type="gene designation" value="cwn-2"/>
</dbReference>
<dbReference type="eggNOG" id="KOG3913">
    <property type="taxonomic scope" value="Eukaryota"/>
</dbReference>
<dbReference type="GeneTree" id="ENSGT00940000169151"/>
<dbReference type="HOGENOM" id="CLU_033039_0_1_1"/>
<dbReference type="InParanoid" id="P34889"/>
<dbReference type="OMA" id="IQVERCH"/>
<dbReference type="OrthoDB" id="5945655at2759"/>
<dbReference type="PhylomeDB" id="P34889"/>
<dbReference type="Reactome" id="R-CEL-3238698">
    <property type="pathway name" value="WNT ligand biogenesis and trafficking"/>
</dbReference>
<dbReference type="Reactome" id="R-CEL-4086398">
    <property type="pathway name" value="Ca2+ pathway"/>
</dbReference>
<dbReference type="Reactome" id="R-CEL-4086400">
    <property type="pathway name" value="PCP/CE pathway"/>
</dbReference>
<dbReference type="Reactome" id="R-CEL-4608870">
    <property type="pathway name" value="Asymmetric localization of PCP proteins"/>
</dbReference>
<dbReference type="Reactome" id="R-CEL-5099900">
    <property type="pathway name" value="WNT5A-dependent internalization of FZD4"/>
</dbReference>
<dbReference type="Reactome" id="R-CEL-5140745">
    <property type="pathway name" value="WNT5A-dependent internalization of FZD2, FZD5 and ROR2"/>
</dbReference>
<dbReference type="Reactome" id="R-CEL-8856825">
    <property type="pathway name" value="Cargo recognition for clathrin-mediated endocytosis"/>
</dbReference>
<dbReference type="Reactome" id="R-CEL-8856828">
    <property type="pathway name" value="Clathrin-mediated endocytosis"/>
</dbReference>
<dbReference type="SignaLink" id="P34889"/>
<dbReference type="PRO" id="PR:P34889"/>
<dbReference type="Proteomes" id="UP000001940">
    <property type="component" value="Chromosome IV"/>
</dbReference>
<dbReference type="Bgee" id="WBGene00000858">
    <property type="expression patterns" value="Expressed in pharyngeal muscle cell (C elegans) and 8 other cell types or tissues"/>
</dbReference>
<dbReference type="GO" id="GO:0005615">
    <property type="term" value="C:extracellular space"/>
    <property type="evidence" value="ECO:0000318"/>
    <property type="project" value="GO_Central"/>
</dbReference>
<dbReference type="GO" id="GO:0005125">
    <property type="term" value="F:cytokine activity"/>
    <property type="evidence" value="ECO:0000318"/>
    <property type="project" value="GO_Central"/>
</dbReference>
<dbReference type="GO" id="GO:0005109">
    <property type="term" value="F:frizzled binding"/>
    <property type="evidence" value="ECO:0000250"/>
    <property type="project" value="WormBase"/>
</dbReference>
<dbReference type="GO" id="GO:0048018">
    <property type="term" value="F:receptor ligand activity"/>
    <property type="evidence" value="ECO:0000250"/>
    <property type="project" value="WormBase"/>
</dbReference>
<dbReference type="GO" id="GO:0009948">
    <property type="term" value="P:anterior/posterior axis specification"/>
    <property type="evidence" value="ECO:0000315"/>
    <property type="project" value="WormBase"/>
</dbReference>
<dbReference type="GO" id="GO:0033564">
    <property type="term" value="P:anterior/posterior axon guidance"/>
    <property type="evidence" value="ECO:0000315"/>
    <property type="project" value="WormBase"/>
</dbReference>
<dbReference type="GO" id="GO:0060070">
    <property type="term" value="P:canonical Wnt signaling pathway"/>
    <property type="evidence" value="ECO:0000318"/>
    <property type="project" value="GO_Central"/>
</dbReference>
<dbReference type="GO" id="GO:0045165">
    <property type="term" value="P:cell fate commitment"/>
    <property type="evidence" value="ECO:0000318"/>
    <property type="project" value="GO_Central"/>
</dbReference>
<dbReference type="GO" id="GO:0060573">
    <property type="term" value="P:cell fate specification involved in pattern specification"/>
    <property type="evidence" value="ECO:0000316"/>
    <property type="project" value="WormBase"/>
</dbReference>
<dbReference type="GO" id="GO:0009792">
    <property type="term" value="P:embryo development ending in birth or egg hatching"/>
    <property type="evidence" value="ECO:0000316"/>
    <property type="project" value="WormBase"/>
</dbReference>
<dbReference type="GO" id="GO:1904936">
    <property type="term" value="P:interneuron migration"/>
    <property type="evidence" value="ECO:0000315"/>
    <property type="project" value="UniProtKB"/>
</dbReference>
<dbReference type="GO" id="GO:0097475">
    <property type="term" value="P:motor neuron migration"/>
    <property type="evidence" value="ECO:0000315"/>
    <property type="project" value="UniProtKB"/>
</dbReference>
<dbReference type="GO" id="GO:0097402">
    <property type="term" value="P:neuroblast migration"/>
    <property type="evidence" value="ECO:0000315"/>
    <property type="project" value="UniProtKB"/>
</dbReference>
<dbReference type="GO" id="GO:0030182">
    <property type="term" value="P:neuron differentiation"/>
    <property type="evidence" value="ECO:0000318"/>
    <property type="project" value="GO_Central"/>
</dbReference>
<dbReference type="GO" id="GO:0001764">
    <property type="term" value="P:neuron migration"/>
    <property type="evidence" value="ECO:0000315"/>
    <property type="project" value="UniProtKB"/>
</dbReference>
<dbReference type="GO" id="GO:1905485">
    <property type="term" value="P:positive regulation of motor neuron migration"/>
    <property type="evidence" value="ECO:0000316"/>
    <property type="project" value="UniProtKB"/>
</dbReference>
<dbReference type="GO" id="GO:0010468">
    <property type="term" value="P:regulation of gene expression"/>
    <property type="evidence" value="ECO:0000315"/>
    <property type="project" value="WormBase"/>
</dbReference>
<dbReference type="GO" id="GO:1904937">
    <property type="term" value="P:sensory neuron migration"/>
    <property type="evidence" value="ECO:0000316"/>
    <property type="project" value="UniProtKB"/>
</dbReference>
<dbReference type="GO" id="GO:0010084">
    <property type="term" value="P:specification of animal organ axis polarity"/>
    <property type="evidence" value="ECO:0000316"/>
    <property type="project" value="WormBase"/>
</dbReference>
<dbReference type="GO" id="GO:0040025">
    <property type="term" value="P:vulval development"/>
    <property type="evidence" value="ECO:0000316"/>
    <property type="project" value="WormBase"/>
</dbReference>
<dbReference type="GO" id="GO:0016055">
    <property type="term" value="P:Wnt signaling pathway"/>
    <property type="evidence" value="ECO:0000316"/>
    <property type="project" value="WormBase"/>
</dbReference>
<dbReference type="CDD" id="cd19337">
    <property type="entry name" value="Wnt_Wnt5"/>
    <property type="match status" value="1"/>
</dbReference>
<dbReference type="FunFam" id="3.30.2460.20:FF:000001">
    <property type="entry name" value="Wnt homolog"/>
    <property type="match status" value="1"/>
</dbReference>
<dbReference type="Gene3D" id="3.30.2460.20">
    <property type="match status" value="1"/>
</dbReference>
<dbReference type="InterPro" id="IPR005817">
    <property type="entry name" value="Wnt"/>
</dbReference>
<dbReference type="InterPro" id="IPR043158">
    <property type="entry name" value="Wnt_C"/>
</dbReference>
<dbReference type="InterPro" id="IPR018161">
    <property type="entry name" value="Wnt_CS"/>
</dbReference>
<dbReference type="PANTHER" id="PTHR12027:SF77">
    <property type="entry name" value="PROTEIN WNT-5"/>
    <property type="match status" value="1"/>
</dbReference>
<dbReference type="PANTHER" id="PTHR12027">
    <property type="entry name" value="WNT RELATED"/>
    <property type="match status" value="1"/>
</dbReference>
<dbReference type="Pfam" id="PF00110">
    <property type="entry name" value="wnt"/>
    <property type="match status" value="1"/>
</dbReference>
<dbReference type="PRINTS" id="PR01349">
    <property type="entry name" value="WNTPROTEIN"/>
</dbReference>
<dbReference type="SMART" id="SM00097">
    <property type="entry name" value="WNT1"/>
    <property type="match status" value="1"/>
</dbReference>
<dbReference type="PROSITE" id="PS00246">
    <property type="entry name" value="WNT1"/>
    <property type="match status" value="1"/>
</dbReference>
<name>WNT2_CAEEL</name>
<proteinExistence type="evidence at protein level"/>
<reference key="1">
    <citation type="journal article" date="1993" name="Oncogene">
        <title>Two wnt genes in Caenorhabditis elegans.</title>
        <authorList>
            <person name="Shackleford G.M."/>
            <person name="Shivakumar S."/>
            <person name="Shiue L."/>
            <person name="Mason J."/>
            <person name="Kenyon C."/>
            <person name="Varmus H.E."/>
        </authorList>
    </citation>
    <scope>NUCLEOTIDE SEQUENCE [MRNA]</scope>
    <scope>DEVELOPMENTAL STAGE</scope>
    <source>
        <strain>Bristol N2</strain>
    </source>
</reference>
<reference key="2">
    <citation type="journal article" date="1998" name="Science">
        <title>Genome sequence of the nematode C. elegans: a platform for investigating biology.</title>
        <authorList>
            <consortium name="The C. elegans sequencing consortium"/>
        </authorList>
    </citation>
    <scope>NUCLEOTIDE SEQUENCE [LARGE SCALE GENOMIC DNA]</scope>
    <source>
        <strain>Bristol N2</strain>
    </source>
</reference>
<reference key="3">
    <citation type="journal article" date="2005" name="Dev. Biol.">
        <title>The C. elegans Frizzled CFZ-2 is required for cell migration and interacts with multiple Wnt signaling pathways.</title>
        <authorList>
            <person name="Zinovyeva A.Y."/>
            <person name="Forrester W.C."/>
        </authorList>
    </citation>
    <scope>FUNCTION</scope>
    <scope>DISRUPTION PHENOTYPE</scope>
</reference>
<reference key="4">
    <citation type="journal article" date="2006" name="Dev. Cell">
        <title>Multiple Wnts and frizzled receptors regulate anteriorly directed cell and growth cone migrations in Caenorhabditis elegans.</title>
        <authorList>
            <person name="Pan C.L."/>
            <person name="Howell J.E."/>
            <person name="Clark S.G."/>
            <person name="Hilliard M."/>
            <person name="Cordes S."/>
            <person name="Bargmann C.I."/>
            <person name="Garriga G."/>
        </authorList>
    </citation>
    <scope>FUNCTION</scope>
    <scope>DISRUPTION PHENOTYPE</scope>
</reference>
<reference key="5">
    <citation type="journal article" date="2008" name="Genetics">
        <title>Complex network of Wnt signaling regulates neuronal migrations during Caenorhabditis elegans development.</title>
        <authorList>
            <person name="Zinovyeva A.Y."/>
            <person name="Yamamoto Y."/>
            <person name="Sawa H."/>
            <person name="Forrester W.C."/>
        </authorList>
    </citation>
    <scope>FUNCTION</scope>
</reference>
<reference key="6">
    <citation type="journal article" date="2009" name="Development">
        <title>Wnt-Ror signaling to SIA and SIB neurons directs anterior axon guidance and nerve ring placement in C. elegans.</title>
        <authorList>
            <person name="Kennerdell J.R."/>
            <person name="Fetter R.D."/>
            <person name="Bargmann C.I."/>
        </authorList>
    </citation>
    <scope>FUNCTION</scope>
    <scope>TISSUE SPECIFICITY</scope>
    <scope>DEVELOPMENTAL STAGE</scope>
    <scope>DISRUPTION PHENOTYPE</scope>
</reference>
<reference key="7">
    <citation type="journal article" date="2009" name="Nat. Neurosci.">
        <title>A trophic role for Wnt-Ror kinase signaling during developmental pruning in Caenorhabditis elegans.</title>
        <authorList>
            <person name="Hayashi Y."/>
            <person name="Hirotsu T."/>
            <person name="Iwata R."/>
            <person name="Kage-Nakadai E."/>
            <person name="Kunitomo H."/>
            <person name="Ishihara T."/>
            <person name="Iino Y."/>
            <person name="Kubo T."/>
        </authorList>
    </citation>
    <scope>FUNCTION</scope>
    <scope>TISSUE SPECIFICITY</scope>
</reference>
<reference key="8">
    <citation type="journal article" date="2010" name="PLoS Genet.">
        <title>A Wnt-Frz/Ror-Dsh pathway regulates neurite outgrowth in Caenorhabditis elegans.</title>
        <authorList>
            <person name="Song S."/>
            <person name="Zhang B."/>
            <person name="Sun H."/>
            <person name="Li X."/>
            <person name="Xiang Y."/>
            <person name="Liu Z."/>
            <person name="Huang X."/>
            <person name="Ding M."/>
        </authorList>
    </citation>
    <scope>FUNCTION</scope>
    <scope>DEVELOPMENTAL STAGE</scope>
    <scope>MUTAGENESIS OF CYS-138</scope>
</reference>
<reference key="9">
    <citation type="journal article" date="2011" name="PLoS Genet.">
        <title>Multiple Wnts redundantly control polarity orientation in Caenorhabditis elegans epithelial stem cells.</title>
        <authorList>
            <person name="Yamamoto Y."/>
            <person name="Takeshita H."/>
            <person name="Sawa H."/>
        </authorList>
    </citation>
    <scope>FUNCTION</scope>
    <scope>TISSUE SPECIFICITY</scope>
</reference>
<reference key="10">
    <citation type="journal article" date="2015" name="Dev. Biol.">
        <title>Autonomous and nonautonomous regulation of Wnt-mediated neuronal polarity by the C. elegans Ror kinase CAM-1.</title>
        <authorList>
            <person name="Chien S.C."/>
            <person name="Gurling M."/>
            <person name="Kim C."/>
            <person name="Craft T."/>
            <person name="Forrester W."/>
            <person name="Garriga G."/>
        </authorList>
    </citation>
    <scope>FUNCTION</scope>
</reference>
<comment type="function">
    <text evidence="6 7 8 9 10 11 12 13 15">Ligand for members of the frizzled family of seven transmembrane receptors. Probable developmental protein. May be a signaling molecule which affects the development of discrete regions of tissues. Is likely to signal over only few cell diameters. Involved in the correct positioning of the developing nerve ring and in axon guidance of SIA and SIB neurons, probably by binding to tyrosine kinase receptor cam-1 (PubMed:19855022). In addition, regulates the positioning of some head neuronal cells, muscle arms associated with the nerve ring and the excretory pore (PubMed:19855022). Together with Wnt ligand cwn-1, regulates the migration of CAN, ALM, BDU and HSN neurons during embryogenesis, the migration of QL and QR neuroblast descendants during larval development, and polarity of ALM neurons (PubMed:16109397, PubMed:16516839, PubMed:18622031, PubMed:25917219). May act through the wnt receptor cfz-2 to regulate QR neuroblast descendant migration, and to direct ALM migration (PubMed:16109397). Also plays a role in axon growth and guidance in HSN and male CP neurons (PubMed:16109397). In addition, together with wnt ligand cwn-1, negatively regulates developmental neurite pruning of AIM neurons probably by acting as a ligand for receptor tyrosine kinase cam-1 (PubMed:19561603). Through the cam-1 receptor also probably regulates the outgrowth of neurites from RME GABAergic motor neurons (PubMed:20711352). May act redundantly with other Wnt ligands such as cwn-1 and mom-2 to control seam cell polarity (PubMed:22022276).</text>
</comment>
<comment type="subcellular location">
    <subcellularLocation>
        <location evidence="4">Secreted</location>
        <location evidence="4">Extracellular space</location>
        <location evidence="4">Extracellular matrix</location>
    </subcellularLocation>
</comment>
<comment type="tissue specificity">
    <text evidence="9 10 12">Expressed in intestine, pharynx, anterior body wall muscle, vulva, some pharyngeal neurons and SMD head neurons (PubMed:19561603, PubMed:19855022, PubMed:22022276). Expressed along the boundary between the intestine and muscle or hypodermis, but is also expressed in the hypodermis in cells including seam cells (PubMed:22022276).</text>
</comment>
<comment type="developmental stage">
    <text evidence="10 11 14">Expressed at the comma stage in pharyngeal muscles and the developing intestine (PubMed:19855022). Detected in all larval forms and adults, but is most abundant in the embryonic stage (PubMed:8510930). At the two-fold stage of embryogenesis, mainly it is expressed in the intestine (PubMed:20711352). During late embryogenesis, before hatching, it is expressed in the posterior pharyngeal bulb and the pharyngeal-intestine (PubMed:20711352). After the L1 stage of larval development it is expressed in the anterior part of the animal in tissues including the pharynx, body wall muscle and ventral cord neurons (PubMed:20711352).</text>
</comment>
<comment type="PTM">
    <text evidence="1 3">Palmitoleoylation is required for efficient binding to frizzled receptors. Depalmitoleoylation leads to Wnt signaling pathway inhibition.</text>
</comment>
<comment type="disruption phenotype">
    <text evidence="6 7 10">Anterior displacement of the nerve ring in L1 stage mutant animals (PubMed:19855022). Defective ALM, BDU, CAN and QR neuroblast migration and irregular CP and CAN axon growth and guidance (PubMed:16109397). Double knockout with cfz-2 results in enhanced CAN migration defects, but the same QR neuroblast migration defects as the single cfz-2 knockout alone (PubMed:16109397). Double knockout with cwn-1 results in ALM, CAN and HSN migration defects (PubMed:16109397, PubMed:16516839). Triple knockout with cwn-1 and cfz-2 results in enhanced neuronal cell migratory defects (PubMed:16109397).</text>
</comment>
<comment type="similarity">
    <text evidence="15">Belongs to the Wnt family.</text>
</comment>
<gene>
    <name evidence="16" type="primary">cwn-2</name>
    <name evidence="16" type="synonym">wnt-2</name>
    <name evidence="16" type="ORF">W01B6.1</name>
</gene>
<protein>
    <recommendedName>
        <fullName>Protein Wnt-2</fullName>
    </recommendedName>
</protein>
<organism>
    <name type="scientific">Caenorhabditis elegans</name>
    <dbReference type="NCBI Taxonomy" id="6239"/>
    <lineage>
        <taxon>Eukaryota</taxon>
        <taxon>Metazoa</taxon>
        <taxon>Ecdysozoa</taxon>
        <taxon>Nematoda</taxon>
        <taxon>Chromadorea</taxon>
        <taxon>Rhabditida</taxon>
        <taxon>Rhabditina</taxon>
        <taxon>Rhabditomorpha</taxon>
        <taxon>Rhabditoidea</taxon>
        <taxon>Rhabditidae</taxon>
        <taxon>Peloderinae</taxon>
        <taxon>Caenorhabditis</taxon>
    </lineage>
</organism>
<keyword id="KW-0217">Developmental protein</keyword>
<keyword id="KW-1015">Disulfide bond</keyword>
<keyword id="KW-0272">Extracellular matrix</keyword>
<keyword id="KW-0325">Glycoprotein</keyword>
<keyword id="KW-0449">Lipoprotein</keyword>
<keyword id="KW-0524">Neurogenesis</keyword>
<keyword id="KW-1185">Reference proteome</keyword>
<keyword id="KW-0964">Secreted</keyword>
<keyword id="KW-0732">Signal</keyword>
<keyword id="KW-0879">Wnt signaling pathway</keyword>